<dbReference type="EMBL" id="EF179403">
    <property type="protein sequence ID" value="ABM55409.1"/>
    <property type="molecule type" value="mRNA"/>
</dbReference>
<dbReference type="PDB" id="8GDL">
    <property type="method" value="X-ray"/>
    <property type="resolution" value="1.75 A"/>
    <property type="chains" value="A/B=15-374"/>
</dbReference>
<dbReference type="PDBsum" id="8GDL"/>
<dbReference type="SMR" id="A2IA89"/>
<dbReference type="GO" id="GO:0005576">
    <property type="term" value="C:extracellular region"/>
    <property type="evidence" value="ECO:0007669"/>
    <property type="project" value="UniProtKB-SubCell"/>
</dbReference>
<dbReference type="GO" id="GO:0016791">
    <property type="term" value="F:phosphatase activity"/>
    <property type="evidence" value="ECO:0007669"/>
    <property type="project" value="UniProtKB-ARBA"/>
</dbReference>
<dbReference type="Gene3D" id="3.40.50.1240">
    <property type="entry name" value="Phosphoglycerate mutase-like"/>
    <property type="match status" value="1"/>
</dbReference>
<dbReference type="InterPro" id="IPR000560">
    <property type="entry name" value="His_Pase_clade-2"/>
</dbReference>
<dbReference type="InterPro" id="IPR029033">
    <property type="entry name" value="His_PPase_superfam"/>
</dbReference>
<dbReference type="InterPro" id="IPR050645">
    <property type="entry name" value="Histidine_acid_phosphatase"/>
</dbReference>
<dbReference type="PANTHER" id="PTHR11567:SF171">
    <property type="entry name" value="ACID PHOSPHATASE FAMILY"/>
    <property type="match status" value="1"/>
</dbReference>
<dbReference type="PANTHER" id="PTHR11567">
    <property type="entry name" value="ACID PHOSPHATASE-RELATED"/>
    <property type="match status" value="1"/>
</dbReference>
<dbReference type="Pfam" id="PF00328">
    <property type="entry name" value="His_Phos_2"/>
    <property type="match status" value="1"/>
</dbReference>
<dbReference type="SUPFAM" id="SSF53254">
    <property type="entry name" value="Phosphoglycerate mutase-like"/>
    <property type="match status" value="1"/>
</dbReference>
<keyword id="KW-0002">3D-structure</keyword>
<keyword id="KW-1015">Disulfide bond</keyword>
<keyword id="KW-0964">Secreted</keyword>
<keyword id="KW-0732">Signal</keyword>
<sequence length="374" mass="41958">TTIILLIAFAAIQLSKADDLKFVFVMARGGDFVAGDYAGGPKIINKEAKDSELTEQGKQEAFQLGTKLSELYKTKLGVSKWDSKTTYWPVALSQKRTQVSTLITGAGLEGDQSKRNKAWTNEELKATSFPAMESFSRFIKPNECPKYLEELMKQKQEISTILKECSSSVQQVKSKYSAVNVNLPQHIWLAYETLKKLKRQQPSSSTWMTDDLMKNLRECSAKITWLATTKTDTLRKLSGGLLLNDLFNDMDQITQGKAQPNAPGGKDSKLNVFTVSQFLVISQLAAFMPEGSKLNNKAVTASDIYPEDGSHVDIEMYQENNKWSVKLVYVSGKDKQPQTITLPGCQEKCPYEQFKSALQKYKITDEEHQKACKN</sequence>
<name>XCAP1_XENCH</name>
<proteinExistence type="evidence at protein level"/>
<accession>A2IA89</accession>
<evidence type="ECO:0000255" key="1"/>
<evidence type="ECO:0000269" key="2">
    <source>
    </source>
</evidence>
<evidence type="ECO:0000303" key="3">
    <source>
    </source>
</evidence>
<evidence type="ECO:0000305" key="4"/>
<evidence type="ECO:0000312" key="5">
    <source>
        <dbReference type="EMBL" id="ABM55409.1"/>
    </source>
</evidence>
<evidence type="ECO:0007744" key="6">
    <source>
        <dbReference type="PDB" id="8GDL"/>
    </source>
</evidence>
<reference evidence="5" key="1">
    <citation type="journal article" date="2007" name="BMC Genomics">
        <title>An insight into the sialome of the oriental rat flea, Xenopsylla cheopis (Rots).</title>
        <authorList>
            <person name="Andersen J.F."/>
            <person name="Hinnebusch B.J."/>
            <person name="Lucas D.A."/>
            <person name="Conrads T.P."/>
            <person name="Veenstra T.D."/>
            <person name="Pham V.M."/>
            <person name="Ribeiro J.M."/>
        </authorList>
    </citation>
    <scope>NUCLEOTIDE SEQUENCE [LARGE SCALE MRNA]</scope>
    <source>
        <tissue evidence="5">Salivary gland</tissue>
    </source>
</reference>
<reference evidence="6" key="2">
    <citation type="journal article" date="2023" name="Commun. Biol.">
        <title>Acid phosphatase-like proteins, a biogenic amine and leukotriene-binding salivary protein family from the flea Xenopsylla cheopis.</title>
        <authorList>
            <person name="Lu S."/>
            <person name="Andersen J.F."/>
            <person name="Bosio C.F."/>
            <person name="Hinnebusch B.J."/>
            <person name="Ribeiro J.M."/>
        </authorList>
    </citation>
    <scope>X-RAY CRYSTALLOGRAPHY (1.75 ANGSTROMS) OF 15-374 IN COMPLEX WITH SEROTONIN AND PALMITOLEIC ACID</scope>
    <scope>FUNCTION</scope>
    <scope>DOMAIN</scope>
    <scope>CAUTION</scope>
    <scope>DISULFIDE BONDS</scope>
</reference>
<protein>
    <recommendedName>
        <fullName evidence="3">Acid phosphatase-like protein XcAP-1</fullName>
        <shortName evidence="3">XcAP-1</shortName>
    </recommendedName>
</protein>
<comment type="function">
    <text evidence="2 4">Probably modulates blood feeding of fleas on vertebrate species by binding and sequestering different mediators involved in the host response (Probable). Binds biogenic amines: serotonin, adrenaline and noradrenaline (PubMed:38110569). Binds leukotriene C4 (PubMed:38110569). Does not bind histamine, leukotriene B4, leukotriene D4, leukotriene E4, ADP, and stable analogs of thromboxane A2: U-46619 and cTXA2 (PubMed:38110569).</text>
</comment>
<comment type="subcellular location">
    <subcellularLocation>
        <location evidence="4">Secreted</location>
    </subcellularLocation>
</comment>
<comment type="domain">
    <text evidence="2">Lipids and biogenic amines bind independently through different binding pockets.</text>
</comment>
<comment type="similarity">
    <text evidence="4">Belongs to the histidine acid phosphatase family.</text>
</comment>
<comment type="caution">
    <text evidence="2">Lacks acid phosphatase catalytic activity.</text>
</comment>
<organism>
    <name type="scientific">Xenopsylla cheopis</name>
    <name type="common">Oriental rat flea</name>
    <name type="synonym">Pulex cheopis</name>
    <dbReference type="NCBI Taxonomy" id="163159"/>
    <lineage>
        <taxon>Eukaryota</taxon>
        <taxon>Metazoa</taxon>
        <taxon>Ecdysozoa</taxon>
        <taxon>Arthropoda</taxon>
        <taxon>Hexapoda</taxon>
        <taxon>Insecta</taxon>
        <taxon>Pterygota</taxon>
        <taxon>Neoptera</taxon>
        <taxon>Endopterygota</taxon>
        <taxon>Siphonaptera</taxon>
        <taxon>Pulicidae</taxon>
        <taxon>Xenopsyllinae</taxon>
        <taxon>Xenopsylla</taxon>
    </lineage>
</organism>
<feature type="signal peptide" evidence="1">
    <location>
        <begin position="1" status="less than"/>
        <end position="17"/>
    </location>
</feature>
<feature type="chain" id="PRO_5002644604" description="Acid phosphatase-like protein XcAP-1" evidence="1">
    <location>
        <begin position="18"/>
        <end position="374"/>
    </location>
</feature>
<feature type="binding site" evidence="2 6">
    <location>
        <position position="25"/>
    </location>
    <ligand>
        <name>serotonin</name>
        <dbReference type="ChEBI" id="CHEBI:350546"/>
    </ligand>
</feature>
<feature type="binding site" evidence="2 6">
    <location>
        <position position="245"/>
    </location>
    <ligand>
        <name>serotonin</name>
        <dbReference type="ChEBI" id="CHEBI:350546"/>
    </ligand>
</feature>
<feature type="binding site" evidence="2 6">
    <location>
        <position position="249"/>
    </location>
    <ligand>
        <name>serotonin</name>
        <dbReference type="ChEBI" id="CHEBI:350546"/>
    </ligand>
</feature>
<feature type="binding site" evidence="2 6">
    <location>
        <position position="271"/>
    </location>
    <ligand>
        <name>serotonin</name>
        <dbReference type="ChEBI" id="CHEBI:350546"/>
    </ligand>
</feature>
<feature type="binding site" evidence="2 6">
    <location>
        <position position="283"/>
    </location>
    <ligand>
        <name>serotonin</name>
        <dbReference type="ChEBI" id="CHEBI:350546"/>
    </ligand>
</feature>
<feature type="disulfide bond" evidence="2 6">
    <location>
        <begin position="144"/>
        <end position="372"/>
    </location>
</feature>
<feature type="disulfide bond" evidence="2 6">
    <location>
        <begin position="165"/>
        <end position="219"/>
    </location>
</feature>
<feature type="disulfide bond" evidence="2 6">
    <location>
        <begin position="345"/>
        <end position="349"/>
    </location>
</feature>
<feature type="non-terminal residue" evidence="5">
    <location>
        <position position="1"/>
    </location>
</feature>